<protein>
    <recommendedName>
        <fullName>Beta-3 adrenergic receptor</fullName>
    </recommendedName>
    <alternativeName>
        <fullName>Beta-3 adrenoreceptor</fullName>
        <shortName>Beta-3 adrenoceptor</shortName>
    </alternativeName>
</protein>
<accession>P26255</accession>
<gene>
    <name type="primary">Adrb3</name>
    <name type="synonym">Adrb3r</name>
</gene>
<reference key="1">
    <citation type="journal article" date="1991" name="J. Biol. Chem.">
        <title>An adipose tissue-specific beta-adrenergic receptor. Molecular cloning and down-regulation in obesity.</title>
        <authorList>
            <person name="Muzzin P."/>
            <person name="Revelli J.-P."/>
            <person name="Kuhne F."/>
            <person name="Gocayne J.D."/>
            <person name="McCombie W.R."/>
            <person name="Venter J.C."/>
            <person name="Giacobino J.-P."/>
            <person name="Fraser C.M."/>
        </authorList>
    </citation>
    <scope>NUCLEOTIDE SEQUENCE [MRNA]</scope>
</reference>
<reference key="2">
    <citation type="journal article" date="1991" name="Mol. Pharmacol.">
        <title>Molecular cloning and expression of the rat beta 3-adrenergic receptor.</title>
        <authorList>
            <person name="Granneman J.G."/>
            <person name="Lahners K.N."/>
            <person name="Chaudhry A."/>
        </authorList>
    </citation>
    <scope>NUCLEOTIDE SEQUENCE [MRNA]</scope>
</reference>
<reference key="3">
    <citation type="journal article" date="1993" name="FEBS Lett.">
        <title>The rat beta 3-adrenergic receptor gene contains an intron.</title>
        <authorList>
            <person name="Bensaid M."/>
            <person name="Kaghad M."/>
            <person name="Rodriguez M."/>
            <person name="le Fur G."/>
            <person name="Caput D."/>
        </authorList>
    </citation>
    <scope>NUCLEOTIDE SEQUENCE</scope>
</reference>
<organism>
    <name type="scientific">Rattus norvegicus</name>
    <name type="common">Rat</name>
    <dbReference type="NCBI Taxonomy" id="10116"/>
    <lineage>
        <taxon>Eukaryota</taxon>
        <taxon>Metazoa</taxon>
        <taxon>Chordata</taxon>
        <taxon>Craniata</taxon>
        <taxon>Vertebrata</taxon>
        <taxon>Euteleostomi</taxon>
        <taxon>Mammalia</taxon>
        <taxon>Eutheria</taxon>
        <taxon>Euarchontoglires</taxon>
        <taxon>Glires</taxon>
        <taxon>Rodentia</taxon>
        <taxon>Myomorpha</taxon>
        <taxon>Muroidea</taxon>
        <taxon>Muridae</taxon>
        <taxon>Murinae</taxon>
        <taxon>Rattus</taxon>
    </lineage>
</organism>
<evidence type="ECO:0000250" key="1"/>
<evidence type="ECO:0000250" key="2">
    <source>
        <dbReference type="UniProtKB" id="P13945"/>
    </source>
</evidence>
<evidence type="ECO:0000255" key="3"/>
<evidence type="ECO:0000255" key="4">
    <source>
        <dbReference type="PROSITE-ProRule" id="PRU00521"/>
    </source>
</evidence>
<evidence type="ECO:0000256" key="5">
    <source>
        <dbReference type="SAM" id="MobiDB-lite"/>
    </source>
</evidence>
<evidence type="ECO:0000305" key="6"/>
<feature type="chain" id="PRO_0000069148" description="Beta-3 adrenergic receptor">
    <location>
        <begin position="1"/>
        <end position="400"/>
    </location>
</feature>
<feature type="topological domain" description="Extracellular" evidence="1">
    <location>
        <begin position="1"/>
        <end position="36"/>
    </location>
</feature>
<feature type="transmembrane region" description="Helical; Name=1" evidence="1">
    <location>
        <begin position="37"/>
        <end position="60"/>
    </location>
</feature>
<feature type="topological domain" description="Cytoplasmic" evidence="1">
    <location>
        <begin position="61"/>
        <end position="69"/>
    </location>
</feature>
<feature type="transmembrane region" description="Helical; Name=2" evidence="1">
    <location>
        <begin position="70"/>
        <end position="88"/>
    </location>
</feature>
<feature type="topological domain" description="Extracellular" evidence="1">
    <location>
        <begin position="89"/>
        <end position="108"/>
    </location>
</feature>
<feature type="transmembrane region" description="Helical; Name=3" evidence="1">
    <location>
        <begin position="109"/>
        <end position="130"/>
    </location>
</feature>
<feature type="topological domain" description="Cytoplasmic" evidence="1">
    <location>
        <begin position="131"/>
        <end position="152"/>
    </location>
</feature>
<feature type="transmembrane region" description="Helical; Name=4" evidence="1">
    <location>
        <begin position="153"/>
        <end position="175"/>
    </location>
</feature>
<feature type="topological domain" description="Extracellular" evidence="1">
    <location>
        <begin position="176"/>
        <end position="200"/>
    </location>
</feature>
<feature type="transmembrane region" description="Helical; Name=5" evidence="1">
    <location>
        <begin position="201"/>
        <end position="222"/>
    </location>
</feature>
<feature type="topological domain" description="Cytoplasmic" evidence="1">
    <location>
        <begin position="223"/>
        <end position="289"/>
    </location>
</feature>
<feature type="transmembrane region" description="Helical; Name=6" evidence="1">
    <location>
        <begin position="290"/>
        <end position="311"/>
    </location>
</feature>
<feature type="topological domain" description="Extracellular" evidence="1">
    <location>
        <begin position="312"/>
        <end position="323"/>
    </location>
</feature>
<feature type="transmembrane region" description="Helical; Name=7" evidence="1">
    <location>
        <begin position="324"/>
        <end position="344"/>
    </location>
</feature>
<feature type="topological domain" description="Cytoplasmic" evidence="1">
    <location>
        <begin position="345"/>
        <end position="400"/>
    </location>
</feature>
<feature type="region of interest" description="Disordered" evidence="5">
    <location>
        <begin position="243"/>
        <end position="272"/>
    </location>
</feature>
<feature type="region of interest" description="Disordered" evidence="5">
    <location>
        <begin position="374"/>
        <end position="400"/>
    </location>
</feature>
<feature type="compositionally biased region" description="Basic and acidic residues" evidence="5">
    <location>
        <begin position="390"/>
        <end position="400"/>
    </location>
</feature>
<feature type="lipid moiety-binding region" description="S-palmitoyl cysteine" evidence="1">
    <location>
        <position position="358"/>
    </location>
</feature>
<feature type="glycosylation site" description="N-linked (GlcNAc...) asparagine" evidence="3">
    <location>
        <position position="8"/>
    </location>
</feature>
<feature type="glycosylation site" description="N-linked (GlcNAc...) asparagine" evidence="3">
    <location>
        <position position="26"/>
    </location>
</feature>
<feature type="disulfide bond" evidence="4">
    <location>
        <begin position="107"/>
        <end position="193"/>
    </location>
</feature>
<feature type="disulfide bond" evidence="4">
    <location>
        <begin position="186"/>
        <end position="192"/>
    </location>
</feature>
<feature type="sequence conflict" description="In Ref. 1; AAA74470." evidence="6" ref="1">
    <original>LL</original>
    <variation>FV</variation>
    <location>
        <begin position="234"/>
        <end position="235"/>
    </location>
</feature>
<comment type="function">
    <text>Beta-adrenergic receptors mediate the catecholamine-induced activation of adenylate cyclase through the action of G proteins. Beta-3 is involved in the regulation of lipolysis and thermogenesis.</text>
</comment>
<comment type="subunit">
    <text evidence="2">Interacts with ARRDC3.</text>
</comment>
<comment type="subcellular location">
    <subcellularLocation>
        <location>Cell membrane</location>
        <topology>Multi-pass membrane protein</topology>
    </subcellularLocation>
</comment>
<comment type="tissue specificity">
    <text>White and brown adipose tissues, and digestive tract.</text>
</comment>
<comment type="similarity">
    <text evidence="4">Belongs to the G-protein coupled receptor 1 family. Adrenergic receptor subfamily. ADRB3 sub-subfamily.</text>
</comment>
<dbReference type="EMBL" id="M74716">
    <property type="protein sequence ID" value="AAA74470.1"/>
    <property type="molecule type" value="mRNA"/>
</dbReference>
<dbReference type="EMBL" id="S73473">
    <property type="protein sequence ID" value="AAB20702.1"/>
    <property type="molecule type" value="mRNA"/>
</dbReference>
<dbReference type="EMBL" id="S56481">
    <property type="protein sequence ID" value="AAB25520.1"/>
    <property type="molecule type" value="mRNA"/>
</dbReference>
<dbReference type="EMBL" id="S56152">
    <property type="protein sequence ID" value="AAB25521.1"/>
    <property type="molecule type" value="Genomic_DNA"/>
</dbReference>
<dbReference type="PIR" id="A41679">
    <property type="entry name" value="A41679"/>
</dbReference>
<dbReference type="PIR" id="A53281">
    <property type="entry name" value="A53281"/>
</dbReference>
<dbReference type="RefSeq" id="NP_037240.2">
    <property type="nucleotide sequence ID" value="NM_013108.2"/>
</dbReference>
<dbReference type="SMR" id="P26255"/>
<dbReference type="FunCoup" id="P26255">
    <property type="interactions" value="98"/>
</dbReference>
<dbReference type="STRING" id="10116.ENSRNOP00000016907"/>
<dbReference type="BindingDB" id="P26255"/>
<dbReference type="ChEMBL" id="CHEMBL4031"/>
<dbReference type="DrugCentral" id="P26255"/>
<dbReference type="GuidetoPHARMACOLOGY" id="30"/>
<dbReference type="GlyCosmos" id="P26255">
    <property type="glycosylation" value="2 sites, No reported glycans"/>
</dbReference>
<dbReference type="GlyGen" id="P26255">
    <property type="glycosylation" value="2 sites"/>
</dbReference>
<dbReference type="iPTMnet" id="P26255"/>
<dbReference type="PhosphoSitePlus" id="P26255"/>
<dbReference type="PaxDb" id="10116-ENSRNOP00000016907"/>
<dbReference type="Ensembl" id="ENSRNOT00000016907.3">
    <property type="protein sequence ID" value="ENSRNOP00000016907.2"/>
    <property type="gene ID" value="ENSRNOG00000012674.6"/>
</dbReference>
<dbReference type="GeneID" id="25645"/>
<dbReference type="KEGG" id="rno:25645"/>
<dbReference type="UCSC" id="RGD:2061">
    <property type="organism name" value="rat"/>
</dbReference>
<dbReference type="AGR" id="RGD:2061"/>
<dbReference type="CTD" id="155"/>
<dbReference type="RGD" id="2061">
    <property type="gene designation" value="Adrb3"/>
</dbReference>
<dbReference type="eggNOG" id="KOG3656">
    <property type="taxonomic scope" value="Eukaryota"/>
</dbReference>
<dbReference type="GeneTree" id="ENSGT00940000158663"/>
<dbReference type="HOGENOM" id="CLU_009579_11_0_1"/>
<dbReference type="InParanoid" id="P26255"/>
<dbReference type="OMA" id="CAFASNI"/>
<dbReference type="OrthoDB" id="5983033at2759"/>
<dbReference type="PhylomeDB" id="P26255"/>
<dbReference type="TreeFam" id="TF316350"/>
<dbReference type="Reactome" id="R-RNO-390696">
    <property type="pathway name" value="Adrenoceptors"/>
</dbReference>
<dbReference type="PRO" id="PR:P26255"/>
<dbReference type="Proteomes" id="UP000002494">
    <property type="component" value="Chromosome 16"/>
</dbReference>
<dbReference type="Bgee" id="ENSRNOG00000012674">
    <property type="expression patterns" value="Expressed in colon and 10 other cell types or tissues"/>
</dbReference>
<dbReference type="GO" id="GO:0016020">
    <property type="term" value="C:membrane"/>
    <property type="evidence" value="ECO:0000266"/>
    <property type="project" value="RGD"/>
</dbReference>
<dbReference type="GO" id="GO:0005886">
    <property type="term" value="C:plasma membrane"/>
    <property type="evidence" value="ECO:0000318"/>
    <property type="project" value="GO_Central"/>
</dbReference>
<dbReference type="GO" id="GO:0043235">
    <property type="term" value="C:receptor complex"/>
    <property type="evidence" value="ECO:0000250"/>
    <property type="project" value="HGNC-UCL"/>
</dbReference>
<dbReference type="GO" id="GO:0031699">
    <property type="term" value="F:beta-3 adrenergic receptor binding"/>
    <property type="evidence" value="ECO:0000266"/>
    <property type="project" value="RGD"/>
</dbReference>
<dbReference type="GO" id="GO:0004939">
    <property type="term" value="F:beta-adrenergic receptor activity"/>
    <property type="evidence" value="ECO:0000250"/>
    <property type="project" value="HGNC-UCL"/>
</dbReference>
<dbReference type="GO" id="GO:0015052">
    <property type="term" value="F:beta3-adrenergic receptor activity"/>
    <property type="evidence" value="ECO:0000250"/>
    <property type="project" value="HGNC-UCL"/>
</dbReference>
<dbReference type="GO" id="GO:0051379">
    <property type="term" value="F:epinephrine binding"/>
    <property type="evidence" value="ECO:0000314"/>
    <property type="project" value="RGD"/>
</dbReference>
<dbReference type="GO" id="GO:0051380">
    <property type="term" value="F:norepinephrine binding"/>
    <property type="evidence" value="ECO:0000314"/>
    <property type="project" value="RGD"/>
</dbReference>
<dbReference type="GO" id="GO:0042803">
    <property type="term" value="F:protein homodimerization activity"/>
    <property type="evidence" value="ECO:0000250"/>
    <property type="project" value="HGNC-UCL"/>
</dbReference>
<dbReference type="GO" id="GO:0071880">
    <property type="term" value="P:adenylate cyclase-activating adrenergic receptor signaling pathway"/>
    <property type="evidence" value="ECO:0000250"/>
    <property type="project" value="HGNC-UCL"/>
</dbReference>
<dbReference type="GO" id="GO:0007189">
    <property type="term" value="P:adenylate cyclase-activating G protein-coupled receptor signaling pathway"/>
    <property type="evidence" value="ECO:0000314"/>
    <property type="project" value="RGD"/>
</dbReference>
<dbReference type="GO" id="GO:0050873">
    <property type="term" value="P:brown fat cell differentiation"/>
    <property type="evidence" value="ECO:0000266"/>
    <property type="project" value="RGD"/>
</dbReference>
<dbReference type="GO" id="GO:0002024">
    <property type="term" value="P:diet induced thermogenesis"/>
    <property type="evidence" value="ECO:0000266"/>
    <property type="project" value="RGD"/>
</dbReference>
<dbReference type="GO" id="GO:0042755">
    <property type="term" value="P:eating behavior"/>
    <property type="evidence" value="ECO:0000314"/>
    <property type="project" value="RGD"/>
</dbReference>
<dbReference type="GO" id="GO:0031649">
    <property type="term" value="P:heat generation"/>
    <property type="evidence" value="ECO:0000266"/>
    <property type="project" value="RGD"/>
</dbReference>
<dbReference type="GO" id="GO:0040015">
    <property type="term" value="P:negative regulation of multicellular organism growth"/>
    <property type="evidence" value="ECO:0000266"/>
    <property type="project" value="RGD"/>
</dbReference>
<dbReference type="GO" id="GO:0002025">
    <property type="term" value="P:norepinephrine-epinephrine-mediated vasodilation involved in regulation of systemic arterial blood pressure"/>
    <property type="evidence" value="ECO:0000266"/>
    <property type="project" value="RGD"/>
</dbReference>
<dbReference type="GO" id="GO:0120162">
    <property type="term" value="P:positive regulation of cold-induced thermogenesis"/>
    <property type="evidence" value="ECO:0000250"/>
    <property type="project" value="YuBioLab"/>
</dbReference>
<dbReference type="GO" id="GO:0043410">
    <property type="term" value="P:positive regulation of MAPK cascade"/>
    <property type="evidence" value="ECO:0000250"/>
    <property type="project" value="HGNC-UCL"/>
</dbReference>
<dbReference type="GO" id="GO:0009409">
    <property type="term" value="P:response to cold"/>
    <property type="evidence" value="ECO:0000266"/>
    <property type="project" value="RGD"/>
</dbReference>
<dbReference type="Gene3D" id="1.20.1070.10">
    <property type="entry name" value="Rhodopsin 7-helix transmembrane proteins"/>
    <property type="match status" value="1"/>
</dbReference>
<dbReference type="InterPro" id="IPR002233">
    <property type="entry name" value="ADR_fam"/>
</dbReference>
<dbReference type="InterPro" id="IPR000681">
    <property type="entry name" value="ADRB3_rcpt"/>
</dbReference>
<dbReference type="InterPro" id="IPR000276">
    <property type="entry name" value="GPCR_Rhodpsn"/>
</dbReference>
<dbReference type="InterPro" id="IPR017452">
    <property type="entry name" value="GPCR_Rhodpsn_7TM"/>
</dbReference>
<dbReference type="PANTHER" id="PTHR24248">
    <property type="entry name" value="ADRENERGIC RECEPTOR-RELATED G-PROTEIN COUPLED RECEPTOR"/>
    <property type="match status" value="1"/>
</dbReference>
<dbReference type="PANTHER" id="PTHR24248:SF3">
    <property type="entry name" value="BETA-3 ADRENERGIC RECEPTOR"/>
    <property type="match status" value="1"/>
</dbReference>
<dbReference type="Pfam" id="PF00001">
    <property type="entry name" value="7tm_1"/>
    <property type="match status" value="1"/>
</dbReference>
<dbReference type="PRINTS" id="PR01103">
    <property type="entry name" value="ADRENERGICR"/>
</dbReference>
<dbReference type="PRINTS" id="PR00563">
    <property type="entry name" value="ADRENRGCB3AR"/>
</dbReference>
<dbReference type="PRINTS" id="PR00237">
    <property type="entry name" value="GPCRRHODOPSN"/>
</dbReference>
<dbReference type="SMART" id="SM01381">
    <property type="entry name" value="7TM_GPCR_Srsx"/>
    <property type="match status" value="1"/>
</dbReference>
<dbReference type="SUPFAM" id="SSF81321">
    <property type="entry name" value="Family A G protein-coupled receptor-like"/>
    <property type="match status" value="1"/>
</dbReference>
<dbReference type="PROSITE" id="PS00237">
    <property type="entry name" value="G_PROTEIN_RECEP_F1_1"/>
    <property type="match status" value="1"/>
</dbReference>
<dbReference type="PROSITE" id="PS50262">
    <property type="entry name" value="G_PROTEIN_RECEP_F1_2"/>
    <property type="match status" value="1"/>
</dbReference>
<name>ADRB3_RAT</name>
<keyword id="KW-1003">Cell membrane</keyword>
<keyword id="KW-1015">Disulfide bond</keyword>
<keyword id="KW-0297">G-protein coupled receptor</keyword>
<keyword id="KW-0325">Glycoprotein</keyword>
<keyword id="KW-0449">Lipoprotein</keyword>
<keyword id="KW-0472">Membrane</keyword>
<keyword id="KW-0564">Palmitate</keyword>
<keyword id="KW-0675">Receptor</keyword>
<keyword id="KW-1185">Reference proteome</keyword>
<keyword id="KW-0807">Transducer</keyword>
<keyword id="KW-0812">Transmembrane</keyword>
<keyword id="KW-1133">Transmembrane helix</keyword>
<sequence length="400" mass="43146">MAPWPHKNGSLAFWSDAPTLDPSAANTSGLPGVPWAAALAGALLALATVGGNLLVITAIARTPRLQTITNVFVTSLATADLVVGLLVMPPGATLALTGHWPLGATGCELWTSVDVLCVTASIETLCALAVDRYLAVTNPLRYGTLVTKRRARAAVVLVWIVSATVSFAPIMSQWWRVGADAEAQECHSNPRCCSFASNMPYALLSSSVSFYLPLLVMLFVYARVFVVAKRQRRLLRRELGRFPPEESPRSPSRSPSPATVGTPTASDGVPSCGRRPARLLPLGEHRALRTLGLIMGIFSLCWLPFFLANVLRALVGPSLVPSGVFIALNWLGYANSAFNPLIYCRSPDFRDAFRRLLCSYGGRGPEEPRVVTFPASPVASRQNSPLNRFDGYEGERPFPT</sequence>
<proteinExistence type="evidence at transcript level"/>